<protein>
    <recommendedName>
        <fullName>Tubulin beta-7 chain</fullName>
    </recommendedName>
    <alternativeName>
        <fullName>Beta-7-tubulin</fullName>
    </alternativeName>
</protein>
<comment type="function">
    <text>Tubulin is the major constituent of microtubules, a cylinder consisting of laterally associated linear protofilaments composed of alpha- and beta-tubulin heterodimers. Microtubules grow by the addition of GTP-tubulin dimers to the microtubule end, where a stabilizing cap forms. Below the cap, tubulin dimers are in GDP-bound state, owing to GTPase activity of alpha-tubulin.</text>
</comment>
<comment type="cofactor">
    <cofactor evidence="1">
        <name>Mg(2+)</name>
        <dbReference type="ChEBI" id="CHEBI:18420"/>
    </cofactor>
</comment>
<comment type="subunit">
    <text>Dimer of alpha and beta chains. A typical microtubule is a hollow water-filled tube with an outer diameter of 25 nm and an inner diameter of 15 nM. Alpha-beta heterodimers associate head-to-tail to form protofilaments running lengthwise along the microtubule wall with the beta-tubulin subunit facing the microtubule plus end conferring a structural polarity. Microtubules usually have 13 protofilaments but different protofilament numbers can be found in some organisms and specialized cells.</text>
</comment>
<comment type="subcellular location">
    <subcellularLocation>
        <location>Cytoplasm</location>
        <location>Cytoskeleton</location>
    </subcellularLocation>
</comment>
<comment type="miscellaneous">
    <text>There are nine genes coding for beta-tubulin.</text>
</comment>
<comment type="similarity">
    <text evidence="4">Belongs to the tubulin family.</text>
</comment>
<feature type="chain" id="PRO_0000048326" description="Tubulin beta-7 chain">
    <location>
        <begin position="1"/>
        <end position="449"/>
    </location>
</feature>
<feature type="region of interest" description="Disordered" evidence="3">
    <location>
        <begin position="422"/>
        <end position="449"/>
    </location>
</feature>
<feature type="compositionally biased region" description="Acidic residues" evidence="3">
    <location>
        <begin position="429"/>
        <end position="449"/>
    </location>
</feature>
<feature type="binding site" evidence="2">
    <location>
        <position position="11"/>
    </location>
    <ligand>
        <name>GTP</name>
        <dbReference type="ChEBI" id="CHEBI:37565"/>
    </ligand>
</feature>
<feature type="binding site" evidence="1">
    <location>
        <position position="69"/>
    </location>
    <ligand>
        <name>GTP</name>
        <dbReference type="ChEBI" id="CHEBI:37565"/>
    </ligand>
</feature>
<feature type="binding site" evidence="1">
    <location>
        <position position="69"/>
    </location>
    <ligand>
        <name>Mg(2+)</name>
        <dbReference type="ChEBI" id="CHEBI:18420"/>
    </ligand>
</feature>
<feature type="binding site" evidence="2">
    <location>
        <position position="138"/>
    </location>
    <ligand>
        <name>GTP</name>
        <dbReference type="ChEBI" id="CHEBI:37565"/>
    </ligand>
</feature>
<feature type="binding site" evidence="2">
    <location>
        <position position="142"/>
    </location>
    <ligand>
        <name>GTP</name>
        <dbReference type="ChEBI" id="CHEBI:37565"/>
    </ligand>
</feature>
<feature type="binding site" evidence="2">
    <location>
        <position position="143"/>
    </location>
    <ligand>
        <name>GTP</name>
        <dbReference type="ChEBI" id="CHEBI:37565"/>
    </ligand>
</feature>
<feature type="binding site" evidence="2">
    <location>
        <position position="144"/>
    </location>
    <ligand>
        <name>GTP</name>
        <dbReference type="ChEBI" id="CHEBI:37565"/>
    </ligand>
</feature>
<feature type="binding site" evidence="2">
    <location>
        <position position="204"/>
    </location>
    <ligand>
        <name>GTP</name>
        <dbReference type="ChEBI" id="CHEBI:37565"/>
    </ligand>
</feature>
<feature type="binding site" evidence="2">
    <location>
        <position position="226"/>
    </location>
    <ligand>
        <name>GTP</name>
        <dbReference type="ChEBI" id="CHEBI:37565"/>
    </ligand>
</feature>
<gene>
    <name type="primary">TUBB7</name>
    <name type="synonym">TUB7</name>
    <name type="ordered locus">At2g29550</name>
    <name type="ORF">F16P2.7</name>
</gene>
<reference key="1">
    <citation type="journal article" date="1992" name="Plant Cell">
        <title>The small genome of Arabidopsis contains at least nine expressed beta-tubulin genes.</title>
        <authorList>
            <person name="Snustad D.P."/>
            <person name="Haas N.A."/>
            <person name="Kopczak S.D."/>
            <person name="Silflow C.D."/>
        </authorList>
    </citation>
    <scope>NUCLEOTIDE SEQUENCE [GENOMIC DNA]</scope>
    <source>
        <strain>cv. Columbia</strain>
    </source>
</reference>
<reference key="2">
    <citation type="journal article" date="1999" name="Nature">
        <title>Sequence and analysis of chromosome 2 of the plant Arabidopsis thaliana.</title>
        <authorList>
            <person name="Lin X."/>
            <person name="Kaul S."/>
            <person name="Rounsley S.D."/>
            <person name="Shea T.P."/>
            <person name="Benito M.-I."/>
            <person name="Town C.D."/>
            <person name="Fujii C.Y."/>
            <person name="Mason T.M."/>
            <person name="Bowman C.L."/>
            <person name="Barnstead M.E."/>
            <person name="Feldblyum T.V."/>
            <person name="Buell C.R."/>
            <person name="Ketchum K.A."/>
            <person name="Lee J.J."/>
            <person name="Ronning C.M."/>
            <person name="Koo H.L."/>
            <person name="Moffat K.S."/>
            <person name="Cronin L.A."/>
            <person name="Shen M."/>
            <person name="Pai G."/>
            <person name="Van Aken S."/>
            <person name="Umayam L."/>
            <person name="Tallon L.J."/>
            <person name="Gill J.E."/>
            <person name="Adams M.D."/>
            <person name="Carrera A.J."/>
            <person name="Creasy T.H."/>
            <person name="Goodman H.M."/>
            <person name="Somerville C.R."/>
            <person name="Copenhaver G.P."/>
            <person name="Preuss D."/>
            <person name="Nierman W.C."/>
            <person name="White O."/>
            <person name="Eisen J.A."/>
            <person name="Salzberg S.L."/>
            <person name="Fraser C.M."/>
            <person name="Venter J.C."/>
        </authorList>
    </citation>
    <scope>NUCLEOTIDE SEQUENCE [LARGE SCALE GENOMIC DNA]</scope>
    <source>
        <strain>cv. Columbia</strain>
    </source>
</reference>
<reference key="3">
    <citation type="journal article" date="2017" name="Plant J.">
        <title>Araport11: a complete reannotation of the Arabidopsis thaliana reference genome.</title>
        <authorList>
            <person name="Cheng C.Y."/>
            <person name="Krishnakumar V."/>
            <person name="Chan A.P."/>
            <person name="Thibaud-Nissen F."/>
            <person name="Schobel S."/>
            <person name="Town C.D."/>
        </authorList>
    </citation>
    <scope>GENOME REANNOTATION</scope>
    <source>
        <strain>cv. Columbia</strain>
    </source>
</reference>
<reference key="4">
    <citation type="journal article" date="2003" name="Science">
        <title>Empirical analysis of transcriptional activity in the Arabidopsis genome.</title>
        <authorList>
            <person name="Yamada K."/>
            <person name="Lim J."/>
            <person name="Dale J.M."/>
            <person name="Chen H."/>
            <person name="Shinn P."/>
            <person name="Palm C.J."/>
            <person name="Southwick A.M."/>
            <person name="Wu H.C."/>
            <person name="Kim C.J."/>
            <person name="Nguyen M."/>
            <person name="Pham P.K."/>
            <person name="Cheuk R.F."/>
            <person name="Karlin-Newmann G."/>
            <person name="Liu S.X."/>
            <person name="Lam B."/>
            <person name="Sakano H."/>
            <person name="Wu T."/>
            <person name="Yu G."/>
            <person name="Miranda M."/>
            <person name="Quach H.L."/>
            <person name="Tripp M."/>
            <person name="Chang C.H."/>
            <person name="Lee J.M."/>
            <person name="Toriumi M.J."/>
            <person name="Chan M.M."/>
            <person name="Tang C.C."/>
            <person name="Onodera C.S."/>
            <person name="Deng J.M."/>
            <person name="Akiyama K."/>
            <person name="Ansari Y."/>
            <person name="Arakawa T."/>
            <person name="Banh J."/>
            <person name="Banno F."/>
            <person name="Bowser L."/>
            <person name="Brooks S.Y."/>
            <person name="Carninci P."/>
            <person name="Chao Q."/>
            <person name="Choy N."/>
            <person name="Enju A."/>
            <person name="Goldsmith A.D."/>
            <person name="Gurjal M."/>
            <person name="Hansen N.F."/>
            <person name="Hayashizaki Y."/>
            <person name="Johnson-Hopson C."/>
            <person name="Hsuan V.W."/>
            <person name="Iida K."/>
            <person name="Karnes M."/>
            <person name="Khan S."/>
            <person name="Koesema E."/>
            <person name="Ishida J."/>
            <person name="Jiang P.X."/>
            <person name="Jones T."/>
            <person name="Kawai J."/>
            <person name="Kamiya A."/>
            <person name="Meyers C."/>
            <person name="Nakajima M."/>
            <person name="Narusaka M."/>
            <person name="Seki M."/>
            <person name="Sakurai T."/>
            <person name="Satou M."/>
            <person name="Tamse R."/>
            <person name="Vaysberg M."/>
            <person name="Wallender E.K."/>
            <person name="Wong C."/>
            <person name="Yamamura Y."/>
            <person name="Yuan S."/>
            <person name="Shinozaki K."/>
            <person name="Davis R.W."/>
            <person name="Theologis A."/>
            <person name="Ecker J.R."/>
        </authorList>
    </citation>
    <scope>NUCLEOTIDE SEQUENCE [LARGE SCALE MRNA]</scope>
    <source>
        <strain>cv. Columbia</strain>
    </source>
</reference>
<reference key="5">
    <citation type="submission" date="2002-03" db="EMBL/GenBank/DDBJ databases">
        <title>Full-length cDNA from Arabidopsis thaliana.</title>
        <authorList>
            <person name="Brover V.V."/>
            <person name="Troukhan M.E."/>
            <person name="Alexandrov N.A."/>
            <person name="Lu Y.-P."/>
            <person name="Flavell R.B."/>
            <person name="Feldmann K.A."/>
        </authorList>
    </citation>
    <scope>NUCLEOTIDE SEQUENCE [LARGE SCALE MRNA]</scope>
</reference>
<dbReference type="EMBL" id="M84704">
    <property type="protein sequence ID" value="AAA32885.1"/>
    <property type="molecule type" value="Genomic_DNA"/>
</dbReference>
<dbReference type="EMBL" id="AC004561">
    <property type="protein sequence ID" value="AAC95184.1"/>
    <property type="molecule type" value="Genomic_DNA"/>
</dbReference>
<dbReference type="EMBL" id="CP002685">
    <property type="protein sequence ID" value="AEC08272.1"/>
    <property type="molecule type" value="Genomic_DNA"/>
</dbReference>
<dbReference type="EMBL" id="AF370568">
    <property type="protein sequence ID" value="AAK49574.1"/>
    <property type="molecule type" value="mRNA"/>
</dbReference>
<dbReference type="EMBL" id="AY090345">
    <property type="protein sequence ID" value="AAL91251.1"/>
    <property type="molecule type" value="mRNA"/>
</dbReference>
<dbReference type="EMBL" id="BT001121">
    <property type="protein sequence ID" value="AAN64512.1"/>
    <property type="molecule type" value="mRNA"/>
</dbReference>
<dbReference type="EMBL" id="AY085710">
    <property type="protein sequence ID" value="AAM62928.1"/>
    <property type="molecule type" value="mRNA"/>
</dbReference>
<dbReference type="PIR" id="JQ1591">
    <property type="entry name" value="JQ1591"/>
</dbReference>
<dbReference type="RefSeq" id="NP_180515.1">
    <property type="nucleotide sequence ID" value="NM_128508.3"/>
</dbReference>
<dbReference type="SMR" id="P29515"/>
<dbReference type="BioGRID" id="2854">
    <property type="interactions" value="5"/>
</dbReference>
<dbReference type="FunCoup" id="P29515">
    <property type="interactions" value="2266"/>
</dbReference>
<dbReference type="IntAct" id="P29515">
    <property type="interactions" value="1"/>
</dbReference>
<dbReference type="MINT" id="P29515"/>
<dbReference type="STRING" id="3702.P29515"/>
<dbReference type="iPTMnet" id="P29515"/>
<dbReference type="PaxDb" id="3702-AT2G29550.1"/>
<dbReference type="ProteomicsDB" id="234246"/>
<dbReference type="EnsemblPlants" id="AT2G29550.1">
    <property type="protein sequence ID" value="AT2G29550.1"/>
    <property type="gene ID" value="AT2G29550"/>
</dbReference>
<dbReference type="GeneID" id="817504"/>
<dbReference type="Gramene" id="AT2G29550.1">
    <property type="protein sequence ID" value="AT2G29550.1"/>
    <property type="gene ID" value="AT2G29550"/>
</dbReference>
<dbReference type="KEGG" id="ath:AT2G29550"/>
<dbReference type="Araport" id="AT2G29550"/>
<dbReference type="TAIR" id="AT2G29550">
    <property type="gene designation" value="TUB7"/>
</dbReference>
<dbReference type="eggNOG" id="KOG1375">
    <property type="taxonomic scope" value="Eukaryota"/>
</dbReference>
<dbReference type="HOGENOM" id="CLU_015718_1_1_1"/>
<dbReference type="InParanoid" id="P29515"/>
<dbReference type="OMA" id="FWEVVNL"/>
<dbReference type="OrthoDB" id="1662883at2759"/>
<dbReference type="PhylomeDB" id="P29515"/>
<dbReference type="PRO" id="PR:P29515"/>
<dbReference type="Proteomes" id="UP000006548">
    <property type="component" value="Chromosome 2"/>
</dbReference>
<dbReference type="ExpressionAtlas" id="P29515">
    <property type="expression patterns" value="baseline and differential"/>
</dbReference>
<dbReference type="GO" id="GO:0005829">
    <property type="term" value="C:cytosol"/>
    <property type="evidence" value="ECO:0007005"/>
    <property type="project" value="TAIR"/>
</dbReference>
<dbReference type="GO" id="GO:0005794">
    <property type="term" value="C:Golgi apparatus"/>
    <property type="evidence" value="ECO:0007005"/>
    <property type="project" value="TAIR"/>
</dbReference>
<dbReference type="GO" id="GO:0005874">
    <property type="term" value="C:microtubule"/>
    <property type="evidence" value="ECO:0007669"/>
    <property type="project" value="UniProtKB-KW"/>
</dbReference>
<dbReference type="GO" id="GO:0005777">
    <property type="term" value="C:peroxisome"/>
    <property type="evidence" value="ECO:0007005"/>
    <property type="project" value="TAIR"/>
</dbReference>
<dbReference type="GO" id="GO:0009505">
    <property type="term" value="C:plant-type cell wall"/>
    <property type="evidence" value="ECO:0007005"/>
    <property type="project" value="TAIR"/>
</dbReference>
<dbReference type="GO" id="GO:0005886">
    <property type="term" value="C:plasma membrane"/>
    <property type="evidence" value="ECO:0007005"/>
    <property type="project" value="TAIR"/>
</dbReference>
<dbReference type="GO" id="GO:0009506">
    <property type="term" value="C:plasmodesma"/>
    <property type="evidence" value="ECO:0007005"/>
    <property type="project" value="TAIR"/>
</dbReference>
<dbReference type="GO" id="GO:0045298">
    <property type="term" value="C:tubulin complex"/>
    <property type="evidence" value="ECO:0000250"/>
    <property type="project" value="TAIR"/>
</dbReference>
<dbReference type="GO" id="GO:0005773">
    <property type="term" value="C:vacuole"/>
    <property type="evidence" value="ECO:0007005"/>
    <property type="project" value="TAIR"/>
</dbReference>
<dbReference type="GO" id="GO:0005525">
    <property type="term" value="F:GTP binding"/>
    <property type="evidence" value="ECO:0007669"/>
    <property type="project" value="UniProtKB-KW"/>
</dbReference>
<dbReference type="GO" id="GO:0003924">
    <property type="term" value="F:GTPase activity"/>
    <property type="evidence" value="ECO:0007669"/>
    <property type="project" value="InterPro"/>
</dbReference>
<dbReference type="GO" id="GO:0046872">
    <property type="term" value="F:metal ion binding"/>
    <property type="evidence" value="ECO:0007669"/>
    <property type="project" value="UniProtKB-KW"/>
</dbReference>
<dbReference type="GO" id="GO:0003729">
    <property type="term" value="F:mRNA binding"/>
    <property type="evidence" value="ECO:0000314"/>
    <property type="project" value="TAIR"/>
</dbReference>
<dbReference type="GO" id="GO:0005200">
    <property type="term" value="F:structural constituent of cytoskeleton"/>
    <property type="evidence" value="ECO:0000250"/>
    <property type="project" value="TAIR"/>
</dbReference>
<dbReference type="GO" id="GO:0007017">
    <property type="term" value="P:microtubule-based process"/>
    <property type="evidence" value="ECO:0000250"/>
    <property type="project" value="TAIR"/>
</dbReference>
<dbReference type="CDD" id="cd02187">
    <property type="entry name" value="beta_tubulin"/>
    <property type="match status" value="1"/>
</dbReference>
<dbReference type="FunFam" id="1.10.287.600:FF:000002">
    <property type="entry name" value="Tubulin beta chain"/>
    <property type="match status" value="1"/>
</dbReference>
<dbReference type="FunFam" id="3.30.1330.20:FF:000002">
    <property type="entry name" value="Tubulin beta chain"/>
    <property type="match status" value="1"/>
</dbReference>
<dbReference type="FunFam" id="3.40.50.1440:FF:000005">
    <property type="entry name" value="Tubulin beta chain"/>
    <property type="match status" value="1"/>
</dbReference>
<dbReference type="Gene3D" id="1.10.287.600">
    <property type="entry name" value="Helix hairpin bin"/>
    <property type="match status" value="1"/>
</dbReference>
<dbReference type="Gene3D" id="3.30.1330.20">
    <property type="entry name" value="Tubulin/FtsZ, C-terminal domain"/>
    <property type="match status" value="1"/>
</dbReference>
<dbReference type="Gene3D" id="3.40.50.1440">
    <property type="entry name" value="Tubulin/FtsZ, GTPase domain"/>
    <property type="match status" value="1"/>
</dbReference>
<dbReference type="InterPro" id="IPR013838">
    <property type="entry name" value="Beta-tubulin_BS"/>
</dbReference>
<dbReference type="InterPro" id="IPR002453">
    <property type="entry name" value="Beta_tubulin"/>
</dbReference>
<dbReference type="InterPro" id="IPR008280">
    <property type="entry name" value="Tub_FtsZ_C"/>
</dbReference>
<dbReference type="InterPro" id="IPR000217">
    <property type="entry name" value="Tubulin"/>
</dbReference>
<dbReference type="InterPro" id="IPR037103">
    <property type="entry name" value="Tubulin/FtsZ-like_C"/>
</dbReference>
<dbReference type="InterPro" id="IPR018316">
    <property type="entry name" value="Tubulin/FtsZ_2-layer-sand-dom"/>
</dbReference>
<dbReference type="InterPro" id="IPR036525">
    <property type="entry name" value="Tubulin/FtsZ_GTPase_sf"/>
</dbReference>
<dbReference type="InterPro" id="IPR023123">
    <property type="entry name" value="Tubulin_C"/>
</dbReference>
<dbReference type="InterPro" id="IPR017975">
    <property type="entry name" value="Tubulin_CS"/>
</dbReference>
<dbReference type="InterPro" id="IPR003008">
    <property type="entry name" value="Tubulin_FtsZ_GTPase"/>
</dbReference>
<dbReference type="PANTHER" id="PTHR11588">
    <property type="entry name" value="TUBULIN"/>
    <property type="match status" value="1"/>
</dbReference>
<dbReference type="Pfam" id="PF00091">
    <property type="entry name" value="Tubulin"/>
    <property type="match status" value="1"/>
</dbReference>
<dbReference type="Pfam" id="PF03953">
    <property type="entry name" value="Tubulin_C"/>
    <property type="match status" value="1"/>
</dbReference>
<dbReference type="PRINTS" id="PR01163">
    <property type="entry name" value="BETATUBULIN"/>
</dbReference>
<dbReference type="PRINTS" id="PR01161">
    <property type="entry name" value="TUBULIN"/>
</dbReference>
<dbReference type="SMART" id="SM00864">
    <property type="entry name" value="Tubulin"/>
    <property type="match status" value="1"/>
</dbReference>
<dbReference type="SMART" id="SM00865">
    <property type="entry name" value="Tubulin_C"/>
    <property type="match status" value="1"/>
</dbReference>
<dbReference type="SUPFAM" id="SSF55307">
    <property type="entry name" value="Tubulin C-terminal domain-like"/>
    <property type="match status" value="1"/>
</dbReference>
<dbReference type="SUPFAM" id="SSF52490">
    <property type="entry name" value="Tubulin nucleotide-binding domain-like"/>
    <property type="match status" value="1"/>
</dbReference>
<dbReference type="PROSITE" id="PS00227">
    <property type="entry name" value="TUBULIN"/>
    <property type="match status" value="1"/>
</dbReference>
<dbReference type="PROSITE" id="PS00228">
    <property type="entry name" value="TUBULIN_B_AUTOREG"/>
    <property type="match status" value="1"/>
</dbReference>
<keyword id="KW-0963">Cytoplasm</keyword>
<keyword id="KW-0206">Cytoskeleton</keyword>
<keyword id="KW-0342">GTP-binding</keyword>
<keyword id="KW-0460">Magnesium</keyword>
<keyword id="KW-0479">Metal-binding</keyword>
<keyword id="KW-0493">Microtubule</keyword>
<keyword id="KW-0547">Nucleotide-binding</keyword>
<keyword id="KW-1185">Reference proteome</keyword>
<organism>
    <name type="scientific">Arabidopsis thaliana</name>
    <name type="common">Mouse-ear cress</name>
    <dbReference type="NCBI Taxonomy" id="3702"/>
    <lineage>
        <taxon>Eukaryota</taxon>
        <taxon>Viridiplantae</taxon>
        <taxon>Streptophyta</taxon>
        <taxon>Embryophyta</taxon>
        <taxon>Tracheophyta</taxon>
        <taxon>Spermatophyta</taxon>
        <taxon>Magnoliopsida</taxon>
        <taxon>eudicotyledons</taxon>
        <taxon>Gunneridae</taxon>
        <taxon>Pentapetalae</taxon>
        <taxon>rosids</taxon>
        <taxon>malvids</taxon>
        <taxon>Brassicales</taxon>
        <taxon>Brassicaceae</taxon>
        <taxon>Camelineae</taxon>
        <taxon>Arabidopsis</taxon>
    </lineage>
</organism>
<name>TBB7_ARATH</name>
<accession>P29515</accession>
<proteinExistence type="evidence at transcript level"/>
<sequence length="449" mass="50747">MREILHIQGGQCGNQIGSKFWEVVNLEHGIDQTGRYVGDSELQLERVNVYYNEASCGRYVPRAVLMDLEPGTMDSVRSGPYGQIFRPDNFVFGQSGAGNNWAKGHYTEGAELIDSVLDVVRKEAENCDCLQGFQVCHSLGGGTGSGMGTLLISKIREEYPDRMMMTFSVFPSPKVSDTVVEPYNATLSVHQLVENADECMVLDNEALYDICFRTLKLSTPSFGDLNHLISATMSGVTCCLRFPGQLNSDLRKLAVNLIPFPRLHFFMVGFAPLTSRGSQQYRNLTVPELTQQMWDAKNMMCAADPRHGRYLTASAMFRGKMSTKEVDEQMLNVQNKNSSYFVEWIPNNVKSTVCDIPPTGLKMASTFIGNSTSIQEMFRRVSEQFTAMFRRKAFLHWYTGEGMDEMEFTEAESNMNDLVSEYQQYQDATADEEGEYEEEEAEYEQEETY</sequence>
<evidence type="ECO:0000250" key="1">
    <source>
        <dbReference type="UniProtKB" id="P68363"/>
    </source>
</evidence>
<evidence type="ECO:0000250" key="2">
    <source>
        <dbReference type="UniProtKB" id="Q13509"/>
    </source>
</evidence>
<evidence type="ECO:0000256" key="3">
    <source>
        <dbReference type="SAM" id="MobiDB-lite"/>
    </source>
</evidence>
<evidence type="ECO:0000305" key="4"/>